<accession>Q9V262</accession>
<accession>G8ZG47</accession>
<proteinExistence type="evidence at protein level"/>
<evidence type="ECO:0000250" key="1">
    <source>
        <dbReference type="UniProtKB" id="P37595"/>
    </source>
</evidence>
<evidence type="ECO:0000250" key="2">
    <source>
        <dbReference type="UniProtKB" id="Q5JHT1"/>
    </source>
</evidence>
<evidence type="ECO:0000269" key="3">
    <source>
    </source>
</evidence>
<evidence type="ECO:0000303" key="4">
    <source>
    </source>
</evidence>
<evidence type="ECO:0000305" key="5"/>
<evidence type="ECO:0000312" key="6">
    <source>
        <dbReference type="EMBL" id="CAB49136.1"/>
    </source>
</evidence>
<name>ASPGP_PYRAB</name>
<reference key="1">
    <citation type="journal article" date="2003" name="Mol. Microbiol.">
        <title>An integrated analysis of the genome of the hyperthermophilic archaeon Pyrococcus abyssi.</title>
        <authorList>
            <person name="Cohen G.N."/>
            <person name="Barbe V."/>
            <person name="Flament D."/>
            <person name="Galperin M."/>
            <person name="Heilig R."/>
            <person name="Lecompte O."/>
            <person name="Poch O."/>
            <person name="Prieur D."/>
            <person name="Querellou J."/>
            <person name="Ripp R."/>
            <person name="Thierry J.-C."/>
            <person name="Van der Oost J."/>
            <person name="Weissenbach J."/>
            <person name="Zivanovic Y."/>
            <person name="Forterre P."/>
        </authorList>
    </citation>
    <scope>NUCLEOTIDE SEQUENCE [LARGE SCALE GENOMIC DNA]</scope>
    <source>
        <strain>GE5 / Orsay</strain>
    </source>
</reference>
<reference key="2">
    <citation type="journal article" date="2012" name="Curr. Microbiol.">
        <title>Re-annotation of two hyperthermophilic archaea Pyrococcus abyssi GE5 and Pyrococcus furiosus DSM 3638.</title>
        <authorList>
            <person name="Gao J."/>
            <person name="Wang J."/>
        </authorList>
    </citation>
    <scope>GENOME REANNOTATION</scope>
    <source>
        <strain>GE5 / Orsay</strain>
    </source>
</reference>
<reference key="3">
    <citation type="journal article" date="2021" name="Braz. J. Biol.">
        <title>Studies on the recombinant production and anticancer activity of thermostable L-asparaginase I from Pyrococcus abyssi.</title>
        <authorList>
            <person name="Nadeem M.S."/>
            <person name="Khan J.A."/>
            <person name="Al-Ghamdi M.A."/>
            <person name="Khan M.I."/>
            <person name="Zeyadi M.A."/>
        </authorList>
    </citation>
    <scope>FUNCTION</scope>
    <scope>CATALYTIC ACTIVITY</scope>
    <scope>BIOPHYSICOCHEMICAL PROPERTIES</scope>
    <scope>SUBUNIT</scope>
    <scope>BIOTECHNOLOGY</scope>
</reference>
<comment type="function">
    <text evidence="3">Catalyzes the hydrolysis of L-asparagine into L-aspartate and ammonia (PubMed:34076169). Does not exhibit glutaminase activity (PubMed:34076169).</text>
</comment>
<comment type="catalytic activity">
    <reaction evidence="3">
        <text>L-asparagine + H2O = L-aspartate + NH4(+)</text>
        <dbReference type="Rhea" id="RHEA:21016"/>
        <dbReference type="ChEBI" id="CHEBI:15377"/>
        <dbReference type="ChEBI" id="CHEBI:28938"/>
        <dbReference type="ChEBI" id="CHEBI:29991"/>
        <dbReference type="ChEBI" id="CHEBI:58048"/>
        <dbReference type="EC" id="3.5.1.1"/>
    </reaction>
</comment>
<comment type="biophysicochemical properties">
    <kinetics>
        <KM evidence="3">2.051 mM for L-asparagine</KM>
    </kinetics>
    <phDependence>
        <text evidence="3">Optimum pH is 8 (PubMed:34076169). Exhibits activity from pH 5 to 10 (PubMed:34076169).</text>
    </phDependence>
    <temperatureDependence>
        <text evidence="3">Displays activity at a broad temperature range and is highly thermostable (PubMed:34076169). Optimum temperature is 80 degrees Celsius (PubMed:34076169).</text>
    </temperatureDependence>
</comment>
<comment type="subunit">
    <text evidence="1 3">Heterotetramer of two alpha and two beta chains arranged as a dimer of alpha/beta heterodimers (By similarity). The uncleaved protein forms homodimers (PubMed:34076169).</text>
</comment>
<comment type="PTM">
    <text evidence="2">Autocleaved (By similarity). Generates the alpha and beta subunits (By similarity). The N-terminal residue of the beta subunit is thought to be responsible for the nucleophile hydrolase activity (By similarity).</text>
</comment>
<comment type="biotechnology">
    <text evidence="3">Absence of L-glutaminase activity, ability to remain active at a wide range of pH and temperature and long term stability at cell culture conditions suggest that this enzyme is a good therapeutic candidate for the treatment of colorectal cancer and hepatocellular carcinoma.</text>
</comment>
<comment type="miscellaneous">
    <text evidence="3">L-asparaginase is an enzyme of therapeutic importance in the treatment of cancer, especially lymphomas and leukemia. It functions by reducing the availability of circulatory L-asparagine to tumor cells. This P.abyssi enzyme shows 78% to 55% growth inhibition of cultured human caco2 and HepG2 cells when subjected to an incubation time of 48 hours.</text>
</comment>
<comment type="similarity">
    <text evidence="5">Belongs to the Ntn-hydrolase family.</text>
</comment>
<keyword id="KW-0068">Autocatalytic cleavage</keyword>
<keyword id="KW-0378">Hydrolase</keyword>
<keyword id="KW-0645">Protease</keyword>
<sequence>MVAIIVHGGAGTIRKEERIPKVLEGVREAVLAGWKELKKGSALDAVEEAIKVLEDNPIFNAGTGSVLTIDGKVEMDAAIMRGKTLEAGAVAGIWGVKNPISVARKVMEKTDHVLLVGEGAVKFARIMGFPEYDPTTEERRKQWQELKEKLMKGEVRHWKKLGELIKEHPEVLRSTVGAVAFDGEEVVAGTSTGGVFLKMFGRVGDTPIIGAGTYANEVAGASCTGLGEVAIKLALAKTATDFVRLGLDAQAASEAAIELATKHFGKDTMGIIMVDSRGNVGFAKNTKHMSYAFMKEGMNEPEAGV</sequence>
<gene>
    <name type="ordered locus">PYRAB02120</name>
    <name evidence="6" type="ORF">PAB0145</name>
</gene>
<protein>
    <recommendedName>
        <fullName evidence="5">Plant-type L-asparaginase</fullName>
        <ecNumber evidence="3">3.5.1.1</ecNumber>
    </recommendedName>
    <alternativeName>
        <fullName evidence="4">L-asparaginase I</fullName>
    </alternativeName>
    <alternativeName>
        <fullName evidence="5">L-asparagine amidohydrolase</fullName>
    </alternativeName>
    <component>
        <recommendedName>
            <fullName>L-asparaginase subunit alpha</fullName>
        </recommendedName>
    </component>
    <component>
        <recommendedName>
            <fullName>L-asparaginase subunit beta</fullName>
        </recommendedName>
    </component>
</protein>
<feature type="chain" id="PRO_0000184579" description="L-asparaginase subunit alpha">
    <location>
        <begin position="1"/>
        <end position="174"/>
    </location>
</feature>
<feature type="chain" id="PRO_0000329016" description="L-asparaginase subunit beta">
    <location>
        <begin position="175"/>
        <end position="305"/>
    </location>
</feature>
<feature type="active site" description="Nucleophile" evidence="1">
    <location>
        <position position="175"/>
    </location>
</feature>
<feature type="binding site" evidence="1">
    <location>
        <begin position="202"/>
        <end position="205"/>
    </location>
    <ligand>
        <name>substrate</name>
    </ligand>
</feature>
<feature type="binding site" evidence="1">
    <location>
        <begin position="224"/>
        <end position="227"/>
    </location>
    <ligand>
        <name>substrate</name>
    </ligand>
</feature>
<feature type="site" description="Cleavage; by autolysis" evidence="1">
    <location>
        <begin position="174"/>
        <end position="175"/>
    </location>
</feature>
<organism>
    <name type="scientific">Pyrococcus abyssi (strain GE5 / Orsay)</name>
    <dbReference type="NCBI Taxonomy" id="272844"/>
    <lineage>
        <taxon>Archaea</taxon>
        <taxon>Methanobacteriati</taxon>
        <taxon>Methanobacteriota</taxon>
        <taxon>Thermococci</taxon>
        <taxon>Thermococcales</taxon>
        <taxon>Thermococcaceae</taxon>
        <taxon>Pyrococcus</taxon>
    </lineage>
</organism>
<dbReference type="EC" id="3.5.1.1" evidence="3"/>
<dbReference type="EMBL" id="AJ248283">
    <property type="protein sequence ID" value="CAB49136.1"/>
    <property type="molecule type" value="Genomic_DNA"/>
</dbReference>
<dbReference type="EMBL" id="HE613800">
    <property type="protein sequence ID" value="CCE69588.1"/>
    <property type="molecule type" value="Genomic_DNA"/>
</dbReference>
<dbReference type="PIR" id="A75211">
    <property type="entry name" value="A75211"/>
</dbReference>
<dbReference type="RefSeq" id="WP_010867336.1">
    <property type="nucleotide sequence ID" value="NC_000868.1"/>
</dbReference>
<dbReference type="SMR" id="Q9V262"/>
<dbReference type="STRING" id="272844.PAB0145"/>
<dbReference type="MEROPS" id="T02.002"/>
<dbReference type="KEGG" id="pab:PAB0145"/>
<dbReference type="PATRIC" id="fig|272844.11.peg.228"/>
<dbReference type="eggNOG" id="arCOG04779">
    <property type="taxonomic scope" value="Archaea"/>
</dbReference>
<dbReference type="HOGENOM" id="CLU_021603_1_2_2"/>
<dbReference type="OrthoDB" id="18230at2157"/>
<dbReference type="PhylomeDB" id="Q9V262"/>
<dbReference type="Proteomes" id="UP000000810">
    <property type="component" value="Chromosome"/>
</dbReference>
<dbReference type="Proteomes" id="UP000009139">
    <property type="component" value="Chromosome"/>
</dbReference>
<dbReference type="GO" id="GO:0005737">
    <property type="term" value="C:cytoplasm"/>
    <property type="evidence" value="ECO:0007669"/>
    <property type="project" value="TreeGrafter"/>
</dbReference>
<dbReference type="GO" id="GO:0004067">
    <property type="term" value="F:asparaginase activity"/>
    <property type="evidence" value="ECO:0007669"/>
    <property type="project" value="UniProtKB-EC"/>
</dbReference>
<dbReference type="GO" id="GO:0008233">
    <property type="term" value="F:peptidase activity"/>
    <property type="evidence" value="ECO:0007669"/>
    <property type="project" value="UniProtKB-KW"/>
</dbReference>
<dbReference type="GO" id="GO:0006508">
    <property type="term" value="P:proteolysis"/>
    <property type="evidence" value="ECO:0007669"/>
    <property type="project" value="UniProtKB-KW"/>
</dbReference>
<dbReference type="CDD" id="cd04512">
    <property type="entry name" value="Ntn_Asparaginase_2_like"/>
    <property type="match status" value="1"/>
</dbReference>
<dbReference type="FunFam" id="3.60.20.30:FF:000001">
    <property type="entry name" value="Isoaspartyl peptidase/L-asparaginase"/>
    <property type="match status" value="1"/>
</dbReference>
<dbReference type="Gene3D" id="3.60.20.30">
    <property type="entry name" value="(Glycosyl)asparaginase"/>
    <property type="match status" value="1"/>
</dbReference>
<dbReference type="InterPro" id="IPR029055">
    <property type="entry name" value="Ntn_hydrolases_N"/>
</dbReference>
<dbReference type="InterPro" id="IPR000246">
    <property type="entry name" value="Peptidase_T2"/>
</dbReference>
<dbReference type="PANTHER" id="PTHR10188">
    <property type="entry name" value="L-ASPARAGINASE"/>
    <property type="match status" value="1"/>
</dbReference>
<dbReference type="PANTHER" id="PTHR10188:SF6">
    <property type="entry name" value="N(4)-(BETA-N-ACETYLGLUCOSAMINYL)-L-ASPARAGINASE"/>
    <property type="match status" value="1"/>
</dbReference>
<dbReference type="Pfam" id="PF01112">
    <property type="entry name" value="Asparaginase_2"/>
    <property type="match status" value="1"/>
</dbReference>
<dbReference type="SUPFAM" id="SSF56235">
    <property type="entry name" value="N-terminal nucleophile aminohydrolases (Ntn hydrolases)"/>
    <property type="match status" value="1"/>
</dbReference>